<keyword id="KW-0413">Isomerase</keyword>
<keyword id="KW-0539">Nucleus</keyword>
<keyword id="KW-1185">Reference proteome</keyword>
<keyword id="KW-0697">Rotamase</keyword>
<feature type="chain" id="PRO_0000233076" description="FK506-binding protein 3">
    <location>
        <begin position="1"/>
        <end position="426"/>
    </location>
</feature>
<feature type="domain" description="PPIase FKBP-type" evidence="2">
    <location>
        <begin position="340"/>
        <end position="426"/>
    </location>
</feature>
<feature type="region of interest" description="Disordered" evidence="3">
    <location>
        <begin position="37"/>
        <end position="143"/>
    </location>
</feature>
<feature type="region of interest" description="Disordered" evidence="3">
    <location>
        <begin position="171"/>
        <end position="314"/>
    </location>
</feature>
<feature type="compositionally biased region" description="Acidic residues" evidence="3">
    <location>
        <begin position="65"/>
        <end position="94"/>
    </location>
</feature>
<feature type="compositionally biased region" description="Acidic residues" evidence="3">
    <location>
        <begin position="111"/>
        <end position="131"/>
    </location>
</feature>
<feature type="compositionally biased region" description="Acidic residues" evidence="3">
    <location>
        <begin position="181"/>
        <end position="225"/>
    </location>
</feature>
<feature type="compositionally biased region" description="Basic and acidic residues" evidence="3">
    <location>
        <begin position="226"/>
        <end position="257"/>
    </location>
</feature>
<feature type="compositionally biased region" description="Basic and acidic residues" evidence="3">
    <location>
        <begin position="264"/>
        <end position="278"/>
    </location>
</feature>
<feature type="compositionally biased region" description="Basic and acidic residues" evidence="3">
    <location>
        <begin position="287"/>
        <end position="311"/>
    </location>
</feature>
<dbReference type="EC" id="5.2.1.8"/>
<dbReference type="EMBL" id="CP017623">
    <property type="protein sequence ID" value="AOW26056.1"/>
    <property type="molecule type" value="Genomic_DNA"/>
</dbReference>
<dbReference type="RefSeq" id="XP_713635.1">
    <property type="nucleotide sequence ID" value="XM_708542.1"/>
</dbReference>
<dbReference type="SMR" id="Q59VR3"/>
<dbReference type="BioGRID" id="1227740">
    <property type="interactions" value="1"/>
</dbReference>
<dbReference type="FunCoup" id="Q59VR3">
    <property type="interactions" value="686"/>
</dbReference>
<dbReference type="STRING" id="237561.Q59VR3"/>
<dbReference type="EnsemblFungi" id="C1_03790C_A-T">
    <property type="protein sequence ID" value="C1_03790C_A-T-p1"/>
    <property type="gene ID" value="C1_03790C_A"/>
</dbReference>
<dbReference type="GeneID" id="3644682"/>
<dbReference type="KEGG" id="cal:CAALFM_C103790CA"/>
<dbReference type="CGD" id="CAL0000196167">
    <property type="gene designation" value="orf19.8632"/>
</dbReference>
<dbReference type="VEuPathDB" id="FungiDB:C1_03790C_A"/>
<dbReference type="eggNOG" id="KOG0552">
    <property type="taxonomic scope" value="Eukaryota"/>
</dbReference>
<dbReference type="HOGENOM" id="CLU_022297_3_1_1"/>
<dbReference type="InParanoid" id="Q59VR3"/>
<dbReference type="OrthoDB" id="77911at2759"/>
<dbReference type="PRO" id="PR:Q59VR3"/>
<dbReference type="Proteomes" id="UP000000559">
    <property type="component" value="Chromosome 1"/>
</dbReference>
<dbReference type="GO" id="GO:0000785">
    <property type="term" value="C:chromatin"/>
    <property type="evidence" value="ECO:0000318"/>
    <property type="project" value="GO_Central"/>
</dbReference>
<dbReference type="GO" id="GO:0005730">
    <property type="term" value="C:nucleolus"/>
    <property type="evidence" value="ECO:0000318"/>
    <property type="project" value="GO_Central"/>
</dbReference>
<dbReference type="GO" id="GO:0003755">
    <property type="term" value="F:peptidyl-prolyl cis-trans isomerase activity"/>
    <property type="evidence" value="ECO:0000318"/>
    <property type="project" value="GO_Central"/>
</dbReference>
<dbReference type="Gene3D" id="3.10.50.40">
    <property type="match status" value="1"/>
</dbReference>
<dbReference type="Gene3D" id="2.60.120.340">
    <property type="entry name" value="Nucleoplasmin core domain"/>
    <property type="match status" value="1"/>
</dbReference>
<dbReference type="InterPro" id="IPR041232">
    <property type="entry name" value="NPL"/>
</dbReference>
<dbReference type="InterPro" id="IPR046357">
    <property type="entry name" value="PPIase_dom_sf"/>
</dbReference>
<dbReference type="InterPro" id="IPR001179">
    <property type="entry name" value="PPIase_FKBP_dom"/>
</dbReference>
<dbReference type="InterPro" id="IPR023566">
    <property type="entry name" value="PPIase_Fpr3/Fpr4-like"/>
</dbReference>
<dbReference type="PANTHER" id="PTHR43811:SF19">
    <property type="entry name" value="39 KDA FK506-BINDING NUCLEAR PROTEIN"/>
    <property type="match status" value="1"/>
</dbReference>
<dbReference type="PANTHER" id="PTHR43811">
    <property type="entry name" value="FKBP-TYPE PEPTIDYL-PROLYL CIS-TRANS ISOMERASE FKPA"/>
    <property type="match status" value="1"/>
</dbReference>
<dbReference type="Pfam" id="PF00254">
    <property type="entry name" value="FKBP_C"/>
    <property type="match status" value="1"/>
</dbReference>
<dbReference type="Pfam" id="PF17800">
    <property type="entry name" value="NPL"/>
    <property type="match status" value="1"/>
</dbReference>
<dbReference type="PIRSF" id="PIRSF001473">
    <property type="entry name" value="FK506-bp_FPR3"/>
    <property type="match status" value="1"/>
</dbReference>
<dbReference type="SUPFAM" id="SSF54534">
    <property type="entry name" value="FKBP-like"/>
    <property type="match status" value="1"/>
</dbReference>
<dbReference type="PROSITE" id="PS50059">
    <property type="entry name" value="FKBP_PPIASE"/>
    <property type="match status" value="1"/>
</dbReference>
<reference key="1">
    <citation type="journal article" date="2004" name="Proc. Natl. Acad. Sci. U.S.A.">
        <title>The diploid genome sequence of Candida albicans.</title>
        <authorList>
            <person name="Jones T."/>
            <person name="Federspiel N.A."/>
            <person name="Chibana H."/>
            <person name="Dungan J."/>
            <person name="Kalman S."/>
            <person name="Magee B.B."/>
            <person name="Newport G."/>
            <person name="Thorstenson Y.R."/>
            <person name="Agabian N."/>
            <person name="Magee P.T."/>
            <person name="Davis R.W."/>
            <person name="Scherer S."/>
        </authorList>
    </citation>
    <scope>NUCLEOTIDE SEQUENCE [LARGE SCALE GENOMIC DNA]</scope>
    <source>
        <strain>SC5314 / ATCC MYA-2876</strain>
    </source>
</reference>
<reference key="2">
    <citation type="journal article" date="2007" name="Genome Biol.">
        <title>Assembly of the Candida albicans genome into sixteen supercontigs aligned on the eight chromosomes.</title>
        <authorList>
            <person name="van het Hoog M."/>
            <person name="Rast T.J."/>
            <person name="Martchenko M."/>
            <person name="Grindle S."/>
            <person name="Dignard D."/>
            <person name="Hogues H."/>
            <person name="Cuomo C."/>
            <person name="Berriman M."/>
            <person name="Scherer S."/>
            <person name="Magee B.B."/>
            <person name="Whiteway M."/>
            <person name="Chibana H."/>
            <person name="Nantel A."/>
            <person name="Magee P.T."/>
        </authorList>
    </citation>
    <scope>GENOME REANNOTATION</scope>
    <source>
        <strain>SC5314 / ATCC MYA-2876</strain>
    </source>
</reference>
<reference key="3">
    <citation type="journal article" date="2013" name="Genome Biol.">
        <title>Assembly of a phased diploid Candida albicans genome facilitates allele-specific measurements and provides a simple model for repeat and indel structure.</title>
        <authorList>
            <person name="Muzzey D."/>
            <person name="Schwartz K."/>
            <person name="Weissman J.S."/>
            <person name="Sherlock G."/>
        </authorList>
    </citation>
    <scope>NUCLEOTIDE SEQUENCE [LARGE SCALE GENOMIC DNA]</scope>
    <scope>GENOME REANNOTATION</scope>
    <source>
        <strain>SC5314 / ATCC MYA-2876</strain>
    </source>
</reference>
<gene>
    <name type="primary">FPR3</name>
    <name type="ordered locus">CAALFM_C103790CA</name>
    <name type="ORF">CaO19.1030</name>
    <name type="ORF">CaO19.8632</name>
</gene>
<evidence type="ECO:0000250" key="1"/>
<evidence type="ECO:0000255" key="2">
    <source>
        <dbReference type="PROSITE-ProRule" id="PRU00277"/>
    </source>
</evidence>
<evidence type="ECO:0000256" key="3">
    <source>
        <dbReference type="SAM" id="MobiDB-lite"/>
    </source>
</evidence>
<evidence type="ECO:0000305" key="4"/>
<sequence length="426" mass="47668">MSNLTPIATYNLALQPFQPVPAIEDDFPISIRITLASLDPEAADDKAEPSSLRILKKSNSLLSDDYFEDDDDDEEEDDEEDELDDEEEEEEAEEEKSSKKSNGKKSSKKDEDEEEDDEEEDDEDNDEDDVSEYIVCTLSPKHQYQQTLDLTITPDEEVYFVVTGSYPIHLTGNYIEHPADQDEEDYDNEDEDYDDEYDLSPDEDEIIYGAPLDDEYDDEEESEEEGTPKIEEIVEEKEKVKESPKESKKRVAEESTSKKSKKAKKDEKKSVQFSKELEQGPTGSTLVEKDNKKATPTKDKKETPVKDDGDKKKKFPTKTLLGGVITEDRKIGSGATAKSGAKVGIRYIGKLKNGKVFDKNTSGKPFSFKLGKGECIKGFDLGVTGMAVGGERRVIIPPKMGYGSQALPGIPANSELTFDIKLVSLK</sequence>
<protein>
    <recommendedName>
        <fullName>FK506-binding protein 3</fullName>
        <ecNumber>5.2.1.8</ecNumber>
    </recommendedName>
    <alternativeName>
        <fullName>Peptidyl-prolyl cis-trans isomerase</fullName>
        <shortName>PPIase</shortName>
    </alternativeName>
    <alternativeName>
        <fullName>Rotamase</fullName>
    </alternativeName>
</protein>
<organism>
    <name type="scientific">Candida albicans (strain SC5314 / ATCC MYA-2876)</name>
    <name type="common">Yeast</name>
    <dbReference type="NCBI Taxonomy" id="237561"/>
    <lineage>
        <taxon>Eukaryota</taxon>
        <taxon>Fungi</taxon>
        <taxon>Dikarya</taxon>
        <taxon>Ascomycota</taxon>
        <taxon>Saccharomycotina</taxon>
        <taxon>Pichiomycetes</taxon>
        <taxon>Debaryomycetaceae</taxon>
        <taxon>Candida/Lodderomyces clade</taxon>
        <taxon>Candida</taxon>
    </lineage>
</organism>
<proteinExistence type="inferred from homology"/>
<comment type="function">
    <text evidence="1">PPIases accelerate the folding of proteins. It catalyzes the cis-trans isomerization of proline imidic peptide bonds in oligopeptides (By similarity).</text>
</comment>
<comment type="catalytic activity">
    <reaction>
        <text>[protein]-peptidylproline (omega=180) = [protein]-peptidylproline (omega=0)</text>
        <dbReference type="Rhea" id="RHEA:16237"/>
        <dbReference type="Rhea" id="RHEA-COMP:10747"/>
        <dbReference type="Rhea" id="RHEA-COMP:10748"/>
        <dbReference type="ChEBI" id="CHEBI:83833"/>
        <dbReference type="ChEBI" id="CHEBI:83834"/>
        <dbReference type="EC" id="5.2.1.8"/>
    </reaction>
</comment>
<comment type="activity regulation">
    <text evidence="1">Inhibited by both FK506 and rapamycin.</text>
</comment>
<comment type="subcellular location">
    <subcellularLocation>
        <location evidence="1">Nucleus</location>
        <location evidence="1">Nucleolus</location>
    </subcellularLocation>
</comment>
<comment type="similarity">
    <text evidence="4">Belongs to the FKBP-type PPIase family. FKBP3/4 subfamily.</text>
</comment>
<name>FKBP3_CANAL</name>
<accession>Q59VR3</accession>
<accession>A0A1D8PD56</accession>
<accession>Q59VV9</accession>